<organism>
    <name type="scientific">Phalaenopsis aphrodite subsp. formosana</name>
    <name type="common">Moth orchid</name>
    <dbReference type="NCBI Taxonomy" id="308872"/>
    <lineage>
        <taxon>Eukaryota</taxon>
        <taxon>Viridiplantae</taxon>
        <taxon>Streptophyta</taxon>
        <taxon>Embryophyta</taxon>
        <taxon>Tracheophyta</taxon>
        <taxon>Spermatophyta</taxon>
        <taxon>Magnoliopsida</taxon>
        <taxon>Liliopsida</taxon>
        <taxon>Asparagales</taxon>
        <taxon>Orchidaceae</taxon>
        <taxon>Epidendroideae</taxon>
        <taxon>Vandeae</taxon>
        <taxon>Aeridinae</taxon>
        <taxon>Phalaenopsis</taxon>
    </lineage>
</organism>
<geneLocation type="chloroplast"/>
<evidence type="ECO:0000255" key="1">
    <source>
        <dbReference type="HAMAP-Rule" id="MF_00432"/>
    </source>
</evidence>
<name>PETG_PHAAO</name>
<comment type="function">
    <text evidence="1">Component of the cytochrome b6-f complex, which mediates electron transfer between photosystem II (PSII) and photosystem I (PSI), cyclic electron flow around PSI, and state transitions. PetG is required for either the stability or assembly of the cytochrome b6-f complex.</text>
</comment>
<comment type="subunit">
    <text evidence="1">The 4 large subunits of the cytochrome b6-f complex are cytochrome b6, subunit IV (17 kDa polypeptide, PetD), cytochrome f and the Rieske protein, while the 4 small subunits are PetG, PetL, PetM and PetN. The complex functions as a dimer.</text>
</comment>
<comment type="subcellular location">
    <subcellularLocation>
        <location evidence="1">Plastid</location>
        <location evidence="1">Chloroplast thylakoid membrane</location>
        <topology evidence="1">Single-pass membrane protein</topology>
    </subcellularLocation>
</comment>
<comment type="similarity">
    <text evidence="1">Belongs to the PetG family.</text>
</comment>
<protein>
    <recommendedName>
        <fullName evidence="1">Cytochrome b6-f complex subunit 5</fullName>
    </recommendedName>
    <alternativeName>
        <fullName evidence="1">Cytochrome b6-f complex subunit PetG</fullName>
    </alternativeName>
    <alternativeName>
        <fullName evidence="1">Cytochrome b6-f complex subunit V</fullName>
    </alternativeName>
</protein>
<keyword id="KW-0150">Chloroplast</keyword>
<keyword id="KW-0249">Electron transport</keyword>
<keyword id="KW-0472">Membrane</keyword>
<keyword id="KW-0602">Photosynthesis</keyword>
<keyword id="KW-0934">Plastid</keyword>
<keyword id="KW-0793">Thylakoid</keyword>
<keyword id="KW-0812">Transmembrane</keyword>
<keyword id="KW-1133">Transmembrane helix</keyword>
<keyword id="KW-0813">Transport</keyword>
<proteinExistence type="inferred from homology"/>
<gene>
    <name evidence="1" type="primary">petG</name>
</gene>
<dbReference type="EMBL" id="AY916449">
    <property type="protein sequence ID" value="AAW82519.1"/>
    <property type="molecule type" value="Genomic_DNA"/>
</dbReference>
<dbReference type="RefSeq" id="YP_358597.1">
    <property type="nucleotide sequence ID" value="NC_007499.1"/>
</dbReference>
<dbReference type="SMR" id="Q3BAM1"/>
<dbReference type="GeneID" id="3741698"/>
<dbReference type="GO" id="GO:0009535">
    <property type="term" value="C:chloroplast thylakoid membrane"/>
    <property type="evidence" value="ECO:0007669"/>
    <property type="project" value="UniProtKB-SubCell"/>
</dbReference>
<dbReference type="GO" id="GO:0009512">
    <property type="term" value="C:cytochrome b6f complex"/>
    <property type="evidence" value="ECO:0007669"/>
    <property type="project" value="InterPro"/>
</dbReference>
<dbReference type="GO" id="GO:0045158">
    <property type="term" value="F:electron transporter, transferring electrons within cytochrome b6/f complex of photosystem II activity"/>
    <property type="evidence" value="ECO:0007669"/>
    <property type="project" value="UniProtKB-UniRule"/>
</dbReference>
<dbReference type="GO" id="GO:0017004">
    <property type="term" value="P:cytochrome complex assembly"/>
    <property type="evidence" value="ECO:0007669"/>
    <property type="project" value="UniProtKB-UniRule"/>
</dbReference>
<dbReference type="GO" id="GO:0015979">
    <property type="term" value="P:photosynthesis"/>
    <property type="evidence" value="ECO:0007669"/>
    <property type="project" value="UniProtKB-KW"/>
</dbReference>
<dbReference type="HAMAP" id="MF_00432">
    <property type="entry name" value="Cytb6_f_PetG"/>
    <property type="match status" value="1"/>
</dbReference>
<dbReference type="InterPro" id="IPR003683">
    <property type="entry name" value="Cyt_6/f_cplx_su5"/>
</dbReference>
<dbReference type="InterPro" id="IPR036099">
    <property type="entry name" value="Cyt_6/f_cplx_su5_sf"/>
</dbReference>
<dbReference type="NCBIfam" id="NF001907">
    <property type="entry name" value="PRK00665.1"/>
    <property type="match status" value="1"/>
</dbReference>
<dbReference type="Pfam" id="PF02529">
    <property type="entry name" value="PetG"/>
    <property type="match status" value="1"/>
</dbReference>
<dbReference type="PIRSF" id="PIRSF000034">
    <property type="entry name" value="Cyt_b6-f_V"/>
    <property type="match status" value="1"/>
</dbReference>
<dbReference type="SUPFAM" id="SSF103446">
    <property type="entry name" value="PetG subunit of the cytochrome b6f complex"/>
    <property type="match status" value="1"/>
</dbReference>
<feature type="chain" id="PRO_0000275502" description="Cytochrome b6-f complex subunit 5">
    <location>
        <begin position="1"/>
        <end position="37"/>
    </location>
</feature>
<feature type="transmembrane region" description="Helical" evidence="1">
    <location>
        <begin position="5"/>
        <end position="25"/>
    </location>
</feature>
<accession>Q3BAM1</accession>
<reference key="1">
    <citation type="journal article" date="2006" name="Mol. Biol. Evol.">
        <title>The chloroplast genome of Phalaenopsis aphrodite (Orchidaceae): comparative analysis of evolutionary rate with that of grasses and its phylogenetic implications.</title>
        <authorList>
            <person name="Chang C.-C."/>
            <person name="Lin H.-C."/>
            <person name="Lin I.-P."/>
            <person name="Chow T.-Y."/>
            <person name="Chen H.-H."/>
            <person name="Chen W.-H."/>
            <person name="Cheng C.-H."/>
            <person name="Lin C.-Y."/>
            <person name="Liu S.-M."/>
            <person name="Chang C.-C."/>
            <person name="Chaw S.-M."/>
        </authorList>
    </citation>
    <scope>NUCLEOTIDE SEQUENCE [LARGE SCALE GENOMIC DNA]</scope>
    <source>
        <strain>cv. Taisugar TS-97</strain>
    </source>
</reference>
<sequence length="37" mass="4200">MIEVFLFGIVLGLIPITLTGLFVTAYLQYRRGDQLDL</sequence>